<accession>Q5FKK7</accession>
<reference key="1">
    <citation type="journal article" date="2005" name="Proc. Natl. Acad. Sci. U.S.A.">
        <title>Complete genome sequence of the probiotic lactic acid bacterium Lactobacillus acidophilus NCFM.</title>
        <authorList>
            <person name="Altermann E."/>
            <person name="Russell W.M."/>
            <person name="Azcarate-Peril M.A."/>
            <person name="Barrangou R."/>
            <person name="Buck B.L."/>
            <person name="McAuliffe O."/>
            <person name="Souther N."/>
            <person name="Dobson A."/>
            <person name="Duong T."/>
            <person name="Callanan M."/>
            <person name="Lick S."/>
            <person name="Hamrick A."/>
            <person name="Cano R."/>
            <person name="Klaenhammer T.R."/>
        </authorList>
    </citation>
    <scope>NUCLEOTIDE SEQUENCE [LARGE SCALE GENOMIC DNA]</scope>
    <source>
        <strain>ATCC 700396 / NCK56 / N2 / NCFM</strain>
    </source>
</reference>
<name>LDH2_LACAC</name>
<keyword id="KW-0963">Cytoplasm</keyword>
<keyword id="KW-0520">NAD</keyword>
<keyword id="KW-0560">Oxidoreductase</keyword>
<keyword id="KW-1185">Reference proteome</keyword>
<evidence type="ECO:0000255" key="1">
    <source>
        <dbReference type="HAMAP-Rule" id="MF_00488"/>
    </source>
</evidence>
<organism>
    <name type="scientific">Lactobacillus acidophilus (strain ATCC 700396 / NCK56 / N2 / NCFM)</name>
    <dbReference type="NCBI Taxonomy" id="272621"/>
    <lineage>
        <taxon>Bacteria</taxon>
        <taxon>Bacillati</taxon>
        <taxon>Bacillota</taxon>
        <taxon>Bacilli</taxon>
        <taxon>Lactobacillales</taxon>
        <taxon>Lactobacillaceae</taxon>
        <taxon>Lactobacillus</taxon>
    </lineage>
</organism>
<proteinExistence type="inferred from homology"/>
<protein>
    <recommendedName>
        <fullName evidence="1">L-lactate dehydrogenase 2</fullName>
        <shortName evidence="1">L-LDH 2</shortName>
        <ecNumber evidence="1">1.1.1.27</ecNumber>
    </recommendedName>
</protein>
<dbReference type="EC" id="1.1.1.27" evidence="1"/>
<dbReference type="EMBL" id="CP000033">
    <property type="protein sequence ID" value="AAV42767.1"/>
    <property type="molecule type" value="Genomic_DNA"/>
</dbReference>
<dbReference type="RefSeq" id="WP_003547001.1">
    <property type="nucleotide sequence ID" value="NC_006814.3"/>
</dbReference>
<dbReference type="RefSeq" id="YP_193798.1">
    <property type="nucleotide sequence ID" value="NC_006814.3"/>
</dbReference>
<dbReference type="SMR" id="Q5FKK7"/>
<dbReference type="STRING" id="272621.LBA0910"/>
<dbReference type="KEGG" id="lac:LBA0910"/>
<dbReference type="PATRIC" id="fig|272621.13.peg.868"/>
<dbReference type="eggNOG" id="COG0039">
    <property type="taxonomic scope" value="Bacteria"/>
</dbReference>
<dbReference type="HOGENOM" id="CLU_045401_1_1_9"/>
<dbReference type="OrthoDB" id="9802969at2"/>
<dbReference type="BioCyc" id="LACI272621:G1G49-917-MONOMER"/>
<dbReference type="UniPathway" id="UPA00554">
    <property type="reaction ID" value="UER00611"/>
</dbReference>
<dbReference type="Proteomes" id="UP000006381">
    <property type="component" value="Chromosome"/>
</dbReference>
<dbReference type="GO" id="GO:0005737">
    <property type="term" value="C:cytoplasm"/>
    <property type="evidence" value="ECO:0007669"/>
    <property type="project" value="UniProtKB-SubCell"/>
</dbReference>
<dbReference type="GO" id="GO:0004459">
    <property type="term" value="F:L-lactate dehydrogenase activity"/>
    <property type="evidence" value="ECO:0007669"/>
    <property type="project" value="UniProtKB-UniRule"/>
</dbReference>
<dbReference type="GO" id="GO:0006096">
    <property type="term" value="P:glycolytic process"/>
    <property type="evidence" value="ECO:0007669"/>
    <property type="project" value="UniProtKB-UniRule"/>
</dbReference>
<dbReference type="GO" id="GO:0006089">
    <property type="term" value="P:lactate metabolic process"/>
    <property type="evidence" value="ECO:0007669"/>
    <property type="project" value="TreeGrafter"/>
</dbReference>
<dbReference type="CDD" id="cd05291">
    <property type="entry name" value="HicDH_like"/>
    <property type="match status" value="1"/>
</dbReference>
<dbReference type="FunFam" id="3.40.50.720:FF:000018">
    <property type="entry name" value="Malate dehydrogenase"/>
    <property type="match status" value="1"/>
</dbReference>
<dbReference type="Gene3D" id="3.90.110.10">
    <property type="entry name" value="Lactate dehydrogenase/glycoside hydrolase, family 4, C-terminal"/>
    <property type="match status" value="1"/>
</dbReference>
<dbReference type="Gene3D" id="3.40.50.720">
    <property type="entry name" value="NAD(P)-binding Rossmann-like Domain"/>
    <property type="match status" value="1"/>
</dbReference>
<dbReference type="HAMAP" id="MF_00488">
    <property type="entry name" value="Lactate_dehydrog"/>
    <property type="match status" value="1"/>
</dbReference>
<dbReference type="InterPro" id="IPR001557">
    <property type="entry name" value="L-lactate/malate_DH"/>
</dbReference>
<dbReference type="InterPro" id="IPR011304">
    <property type="entry name" value="L-lactate_DH"/>
</dbReference>
<dbReference type="InterPro" id="IPR018177">
    <property type="entry name" value="L-lactate_DH_AS"/>
</dbReference>
<dbReference type="InterPro" id="IPR022383">
    <property type="entry name" value="Lactate/malate_DH_C"/>
</dbReference>
<dbReference type="InterPro" id="IPR001236">
    <property type="entry name" value="Lactate/malate_DH_N"/>
</dbReference>
<dbReference type="InterPro" id="IPR015955">
    <property type="entry name" value="Lactate_DH/Glyco_Ohase_4_C"/>
</dbReference>
<dbReference type="InterPro" id="IPR036291">
    <property type="entry name" value="NAD(P)-bd_dom_sf"/>
</dbReference>
<dbReference type="NCBIfam" id="TIGR01771">
    <property type="entry name" value="L-LDH-NAD"/>
    <property type="match status" value="1"/>
</dbReference>
<dbReference type="NCBIfam" id="NF000824">
    <property type="entry name" value="PRK00066.1"/>
    <property type="match status" value="1"/>
</dbReference>
<dbReference type="PANTHER" id="PTHR43128">
    <property type="entry name" value="L-2-HYDROXYCARBOXYLATE DEHYDROGENASE (NAD(P)(+))"/>
    <property type="match status" value="1"/>
</dbReference>
<dbReference type="PANTHER" id="PTHR43128:SF16">
    <property type="entry name" value="L-LACTATE DEHYDROGENASE"/>
    <property type="match status" value="1"/>
</dbReference>
<dbReference type="Pfam" id="PF02866">
    <property type="entry name" value="Ldh_1_C"/>
    <property type="match status" value="1"/>
</dbReference>
<dbReference type="Pfam" id="PF00056">
    <property type="entry name" value="Ldh_1_N"/>
    <property type="match status" value="1"/>
</dbReference>
<dbReference type="PIRSF" id="PIRSF000102">
    <property type="entry name" value="Lac_mal_DH"/>
    <property type="match status" value="1"/>
</dbReference>
<dbReference type="PRINTS" id="PR00086">
    <property type="entry name" value="LLDHDRGNASE"/>
</dbReference>
<dbReference type="SUPFAM" id="SSF56327">
    <property type="entry name" value="LDH C-terminal domain-like"/>
    <property type="match status" value="1"/>
</dbReference>
<dbReference type="SUPFAM" id="SSF51735">
    <property type="entry name" value="NAD(P)-binding Rossmann-fold domains"/>
    <property type="match status" value="1"/>
</dbReference>
<dbReference type="PROSITE" id="PS00064">
    <property type="entry name" value="L_LDH"/>
    <property type="match status" value="1"/>
</dbReference>
<sequence length="308" mass="33349">MSRKVFLVGDGAVGSTFANDLLQNTTVDELAIFDVAKDRPVGDSMDLEDITPFTGQTNIHPAEYSDAKDADVCVITAGVPRKPGETRLDLVNKNVKILKTIVDPVVESGFKGVFVVSANPVDILTTLTQKISGFPKDRVIGTGTSLDSMRLRVELAKKLNVPVAKVNSMVLGEHGDTSFENFDESTVDNKPLRDYSEINDNVLSEIESDVRKKGGKIITNKGATFYGVAMMLTQIVSAILDNRSICLPLSAPINGEYGIKHDLYLGTPTIINGNGIEKVIETKLSDVEKAKMINSADKMQEVLSGVEM</sequence>
<gene>
    <name evidence="1" type="primary">ldh2</name>
    <name type="ordered locus">LBA0910</name>
</gene>
<feature type="chain" id="PRO_0000237548" description="L-lactate dehydrogenase 2">
    <location>
        <begin position="1"/>
        <end position="308"/>
    </location>
</feature>
<feature type="active site" description="Proton acceptor" evidence="1">
    <location>
        <position position="174"/>
    </location>
</feature>
<feature type="binding site" evidence="1">
    <location>
        <position position="13"/>
    </location>
    <ligand>
        <name>NAD(+)</name>
        <dbReference type="ChEBI" id="CHEBI:57540"/>
    </ligand>
</feature>
<feature type="binding site" evidence="1">
    <location>
        <position position="34"/>
    </location>
    <ligand>
        <name>NAD(+)</name>
        <dbReference type="ChEBI" id="CHEBI:57540"/>
    </ligand>
</feature>
<feature type="binding site" evidence="1">
    <location>
        <position position="39"/>
    </location>
    <ligand>
        <name>NAD(+)</name>
        <dbReference type="ChEBI" id="CHEBI:57540"/>
    </ligand>
</feature>
<feature type="binding site" evidence="1">
    <location>
        <position position="64"/>
    </location>
    <ligand>
        <name>NAD(+)</name>
        <dbReference type="ChEBI" id="CHEBI:57540"/>
    </ligand>
</feature>
<feature type="binding site" evidence="1">
    <location>
        <begin position="78"/>
        <end position="79"/>
    </location>
    <ligand>
        <name>NAD(+)</name>
        <dbReference type="ChEBI" id="CHEBI:57540"/>
    </ligand>
</feature>
<feature type="binding site" evidence="1">
    <location>
        <position position="87"/>
    </location>
    <ligand>
        <name>substrate</name>
    </ligand>
</feature>
<feature type="binding site" evidence="1">
    <location>
        <position position="100"/>
    </location>
    <ligand>
        <name>NAD(+)</name>
        <dbReference type="ChEBI" id="CHEBI:57540"/>
    </ligand>
</feature>
<feature type="binding site" evidence="1">
    <location>
        <begin position="119"/>
        <end position="122"/>
    </location>
    <ligand>
        <name>substrate</name>
    </ligand>
</feature>
<feature type="binding site" evidence="1">
    <location>
        <position position="142"/>
    </location>
    <ligand>
        <name>NAD(+)</name>
        <dbReference type="ChEBI" id="CHEBI:57540"/>
    </ligand>
</feature>
<feature type="binding site" evidence="1">
    <location>
        <begin position="147"/>
        <end position="150"/>
    </location>
    <ligand>
        <name>substrate</name>
    </ligand>
</feature>
<feature type="binding site" evidence="1">
    <location>
        <position position="224"/>
    </location>
    <ligand>
        <name>substrate</name>
    </ligand>
</feature>
<comment type="function">
    <text evidence="1">Catalyzes the conversion of lactate to pyruvate.</text>
</comment>
<comment type="catalytic activity">
    <reaction evidence="1">
        <text>(S)-lactate + NAD(+) = pyruvate + NADH + H(+)</text>
        <dbReference type="Rhea" id="RHEA:23444"/>
        <dbReference type="ChEBI" id="CHEBI:15361"/>
        <dbReference type="ChEBI" id="CHEBI:15378"/>
        <dbReference type="ChEBI" id="CHEBI:16651"/>
        <dbReference type="ChEBI" id="CHEBI:57540"/>
        <dbReference type="ChEBI" id="CHEBI:57945"/>
        <dbReference type="EC" id="1.1.1.27"/>
    </reaction>
</comment>
<comment type="pathway">
    <text evidence="1">Fermentation; pyruvate fermentation to lactate; (S)-lactate from pyruvate: step 1/1.</text>
</comment>
<comment type="subunit">
    <text evidence="1">Homotetramer.</text>
</comment>
<comment type="subcellular location">
    <subcellularLocation>
        <location evidence="1">Cytoplasm</location>
    </subcellularLocation>
</comment>
<comment type="similarity">
    <text evidence="1">Belongs to the LDH/MDH superfamily. LDH family.</text>
</comment>